<protein>
    <recommendedName>
        <fullName evidence="1">Protease HtpX</fullName>
        <ecNumber evidence="1">3.4.24.-</ecNumber>
    </recommendedName>
    <alternativeName>
        <fullName evidence="1">Heat shock protein HtpX</fullName>
    </alternativeName>
</protein>
<reference key="1">
    <citation type="journal article" date="2005" name="Nucleic Acids Res.">
        <title>Genome dynamics and diversity of Shigella species, the etiologic agents of bacillary dysentery.</title>
        <authorList>
            <person name="Yang F."/>
            <person name="Yang J."/>
            <person name="Zhang X."/>
            <person name="Chen L."/>
            <person name="Jiang Y."/>
            <person name="Yan Y."/>
            <person name="Tang X."/>
            <person name="Wang J."/>
            <person name="Xiong Z."/>
            <person name="Dong J."/>
            <person name="Xue Y."/>
            <person name="Zhu Y."/>
            <person name="Xu X."/>
            <person name="Sun L."/>
            <person name="Chen S."/>
            <person name="Nie H."/>
            <person name="Peng J."/>
            <person name="Xu J."/>
            <person name="Wang Y."/>
            <person name="Yuan Z."/>
            <person name="Wen Y."/>
            <person name="Yao Z."/>
            <person name="Shen Y."/>
            <person name="Qiang B."/>
            <person name="Hou Y."/>
            <person name="Yu J."/>
            <person name="Jin Q."/>
        </authorList>
    </citation>
    <scope>NUCLEOTIDE SEQUENCE [LARGE SCALE GENOMIC DNA]</scope>
    <source>
        <strain>Sd197</strain>
    </source>
</reference>
<accession>Q32F28</accession>
<feature type="chain" id="PRO_1000020943" description="Protease HtpX">
    <location>
        <begin position="1"/>
        <end position="293"/>
    </location>
</feature>
<feature type="transmembrane region" description="Helical" evidence="1">
    <location>
        <begin position="4"/>
        <end position="24"/>
    </location>
</feature>
<feature type="transmembrane region" description="Helical" evidence="1">
    <location>
        <begin position="34"/>
        <end position="54"/>
    </location>
</feature>
<feature type="transmembrane region" description="Helical" evidence="1">
    <location>
        <begin position="158"/>
        <end position="178"/>
    </location>
</feature>
<feature type="transmembrane region" description="Helical" evidence="1">
    <location>
        <begin position="193"/>
        <end position="213"/>
    </location>
</feature>
<feature type="active site" evidence="1">
    <location>
        <position position="140"/>
    </location>
</feature>
<feature type="binding site" evidence="1">
    <location>
        <position position="139"/>
    </location>
    <ligand>
        <name>Zn(2+)</name>
        <dbReference type="ChEBI" id="CHEBI:29105"/>
        <note>catalytic</note>
    </ligand>
</feature>
<feature type="binding site" evidence="1">
    <location>
        <position position="143"/>
    </location>
    <ligand>
        <name>Zn(2+)</name>
        <dbReference type="ChEBI" id="CHEBI:29105"/>
        <note>catalytic</note>
    </ligand>
</feature>
<feature type="binding site" evidence="1">
    <location>
        <position position="222"/>
    </location>
    <ligand>
        <name>Zn(2+)</name>
        <dbReference type="ChEBI" id="CHEBI:29105"/>
        <note>catalytic</note>
    </ligand>
</feature>
<gene>
    <name evidence="1" type="primary">htpX</name>
    <name type="ordered locus">SDY_1977</name>
</gene>
<comment type="cofactor">
    <cofactor evidence="1">
        <name>Zn(2+)</name>
        <dbReference type="ChEBI" id="CHEBI:29105"/>
    </cofactor>
    <text evidence="1">Binds 1 zinc ion per subunit.</text>
</comment>
<comment type="subcellular location">
    <subcellularLocation>
        <location evidence="1">Cell inner membrane</location>
        <topology evidence="1">Multi-pass membrane protein</topology>
    </subcellularLocation>
</comment>
<comment type="similarity">
    <text evidence="1">Belongs to the peptidase M48B family.</text>
</comment>
<organism>
    <name type="scientific">Shigella dysenteriae serotype 1 (strain Sd197)</name>
    <dbReference type="NCBI Taxonomy" id="300267"/>
    <lineage>
        <taxon>Bacteria</taxon>
        <taxon>Pseudomonadati</taxon>
        <taxon>Pseudomonadota</taxon>
        <taxon>Gammaproteobacteria</taxon>
        <taxon>Enterobacterales</taxon>
        <taxon>Enterobacteriaceae</taxon>
        <taxon>Shigella</taxon>
    </lineage>
</organism>
<dbReference type="EC" id="3.4.24.-" evidence="1"/>
<dbReference type="EMBL" id="CP000034">
    <property type="protein sequence ID" value="ABB62077.1"/>
    <property type="molecule type" value="Genomic_DNA"/>
</dbReference>
<dbReference type="RefSeq" id="WP_000984517.1">
    <property type="nucleotide sequence ID" value="NC_007606.1"/>
</dbReference>
<dbReference type="RefSeq" id="YP_403568.1">
    <property type="nucleotide sequence ID" value="NC_007606.1"/>
</dbReference>
<dbReference type="SMR" id="Q32F28"/>
<dbReference type="STRING" id="300267.SDY_1977"/>
<dbReference type="MEROPS" id="M48.002"/>
<dbReference type="EnsemblBacteria" id="ABB62077">
    <property type="protein sequence ID" value="ABB62077"/>
    <property type="gene ID" value="SDY_1977"/>
</dbReference>
<dbReference type="GeneID" id="93776079"/>
<dbReference type="KEGG" id="sdy:SDY_1977"/>
<dbReference type="PATRIC" id="fig|300267.13.peg.2387"/>
<dbReference type="HOGENOM" id="CLU_042266_1_0_6"/>
<dbReference type="Proteomes" id="UP000002716">
    <property type="component" value="Chromosome"/>
</dbReference>
<dbReference type="GO" id="GO:0005886">
    <property type="term" value="C:plasma membrane"/>
    <property type="evidence" value="ECO:0007669"/>
    <property type="project" value="UniProtKB-SubCell"/>
</dbReference>
<dbReference type="GO" id="GO:0004222">
    <property type="term" value="F:metalloendopeptidase activity"/>
    <property type="evidence" value="ECO:0007669"/>
    <property type="project" value="UniProtKB-UniRule"/>
</dbReference>
<dbReference type="GO" id="GO:0008270">
    <property type="term" value="F:zinc ion binding"/>
    <property type="evidence" value="ECO:0007669"/>
    <property type="project" value="UniProtKB-UniRule"/>
</dbReference>
<dbReference type="GO" id="GO:0006508">
    <property type="term" value="P:proteolysis"/>
    <property type="evidence" value="ECO:0007669"/>
    <property type="project" value="UniProtKB-KW"/>
</dbReference>
<dbReference type="CDD" id="cd07335">
    <property type="entry name" value="M48B_HtpX_like"/>
    <property type="match status" value="1"/>
</dbReference>
<dbReference type="FunFam" id="3.30.2010.10:FF:000001">
    <property type="entry name" value="Protease HtpX"/>
    <property type="match status" value="1"/>
</dbReference>
<dbReference type="Gene3D" id="3.30.2010.10">
    <property type="entry name" value="Metalloproteases ('zincins'), catalytic domain"/>
    <property type="match status" value="1"/>
</dbReference>
<dbReference type="HAMAP" id="MF_00188">
    <property type="entry name" value="Pept_M48_protease_HtpX"/>
    <property type="match status" value="1"/>
</dbReference>
<dbReference type="InterPro" id="IPR050083">
    <property type="entry name" value="HtpX_protease"/>
</dbReference>
<dbReference type="InterPro" id="IPR022919">
    <property type="entry name" value="Pept_M48_protease_HtpX"/>
</dbReference>
<dbReference type="InterPro" id="IPR001915">
    <property type="entry name" value="Peptidase_M48"/>
</dbReference>
<dbReference type="NCBIfam" id="NF003965">
    <property type="entry name" value="PRK05457.1"/>
    <property type="match status" value="1"/>
</dbReference>
<dbReference type="PANTHER" id="PTHR43221">
    <property type="entry name" value="PROTEASE HTPX"/>
    <property type="match status" value="1"/>
</dbReference>
<dbReference type="PANTHER" id="PTHR43221:SF1">
    <property type="entry name" value="PROTEASE HTPX"/>
    <property type="match status" value="1"/>
</dbReference>
<dbReference type="Pfam" id="PF01435">
    <property type="entry name" value="Peptidase_M48"/>
    <property type="match status" value="1"/>
</dbReference>
<sequence>MMRIALFLLTNLAVMVVFGLVLSLTGIQSSSVQGLMIMALLFGFGGSFVSLLMSKWMALRSVGGEVIEQPRNERERWLVNTVATQARQAGIAMPQVAIYHAPDINAFATGARRDASLVAVSTGLLQNMSPDEAEAVIAHEISHIANGDMVTMTLIQGVVNTFVIFISRILAQLAAGFMGGNRDEGEESNGNPLIYFAVATVLELVFGILASIITMWFSRHREFHADAGSAKLVGREKMIAALQRLKTSYEPQEATSMMAFCINGKSKSLSELFMTHPPLDKRIEALRTGEYLK</sequence>
<keyword id="KW-0997">Cell inner membrane</keyword>
<keyword id="KW-1003">Cell membrane</keyword>
<keyword id="KW-0378">Hydrolase</keyword>
<keyword id="KW-0472">Membrane</keyword>
<keyword id="KW-0479">Metal-binding</keyword>
<keyword id="KW-0482">Metalloprotease</keyword>
<keyword id="KW-0645">Protease</keyword>
<keyword id="KW-1185">Reference proteome</keyword>
<keyword id="KW-0346">Stress response</keyword>
<keyword id="KW-0812">Transmembrane</keyword>
<keyword id="KW-1133">Transmembrane helix</keyword>
<keyword id="KW-0862">Zinc</keyword>
<name>HTPX_SHIDS</name>
<proteinExistence type="inferred from homology"/>
<evidence type="ECO:0000255" key="1">
    <source>
        <dbReference type="HAMAP-Rule" id="MF_00188"/>
    </source>
</evidence>